<dbReference type="EMBL" id="AL596171">
    <property type="protein sequence ID" value="CAC97555.1"/>
    <property type="molecule type" value="Genomic_DNA"/>
</dbReference>
<dbReference type="PIR" id="AC1723">
    <property type="entry name" value="AC1723"/>
</dbReference>
<dbReference type="RefSeq" id="WP_003763570.1">
    <property type="nucleotide sequence ID" value="NC_003212.1"/>
</dbReference>
<dbReference type="STRING" id="272626.gene:17566689"/>
<dbReference type="KEGG" id="lin:lin2327"/>
<dbReference type="eggNOG" id="COG4399">
    <property type="taxonomic scope" value="Bacteria"/>
</dbReference>
<dbReference type="HOGENOM" id="CLU_042384_0_0_9"/>
<dbReference type="OrthoDB" id="9787430at2"/>
<dbReference type="Proteomes" id="UP000002513">
    <property type="component" value="Chromosome"/>
</dbReference>
<dbReference type="GO" id="GO:0005886">
    <property type="term" value="C:plasma membrane"/>
    <property type="evidence" value="ECO:0007669"/>
    <property type="project" value="UniProtKB-SubCell"/>
</dbReference>
<dbReference type="InterPro" id="IPR007383">
    <property type="entry name" value="DUF445"/>
</dbReference>
<dbReference type="InterPro" id="IPR016991">
    <property type="entry name" value="UCP032178"/>
</dbReference>
<dbReference type="PANTHER" id="PTHR35791">
    <property type="entry name" value="UPF0754 MEMBRANE PROTEIN YHEB"/>
    <property type="match status" value="1"/>
</dbReference>
<dbReference type="PANTHER" id="PTHR35791:SF1">
    <property type="entry name" value="UPF0754 MEMBRANE PROTEIN YHEB"/>
    <property type="match status" value="1"/>
</dbReference>
<dbReference type="Pfam" id="PF04286">
    <property type="entry name" value="DUF445"/>
    <property type="match status" value="1"/>
</dbReference>
<dbReference type="PIRSF" id="PIRSF032178">
    <property type="entry name" value="UCP032178"/>
    <property type="match status" value="1"/>
</dbReference>
<protein>
    <recommendedName>
        <fullName>UPF0754 membrane protein lin2327</fullName>
    </recommendedName>
</protein>
<sequence>MSVLFTILLMAVIGGFIGAMTNYIAIRMLFRPYKAVYLFNKRLPFTPGLIPKRRDELAEHIGKVVVSHLLTEDAIRARLLDENLQREVTETITKMFHEKMKLETTPNELLHHLGYENAEVRSISWLERTLEIEISRFLTTKQSTQMSELIPSMLENELTKKLPHVTERITSKMSVFIASEAGKIQIKQMLQKFFEEHGKMGSMARMFINIDSFSEKIQQEGLKLINQEDTKNIINQLLTTEWHNFEAKELQELIPTEKQAHLAGQLTSEIIQAVPHEKLFNQPIQGILRNYESAITEKMIPFAVERMLDFVATHSAEIVERMDLAKLVETQIATFSLPEIEKLVVEISGRELKMITYLGGILGGFIGIIQGILAMWI</sequence>
<accession>Q929E9</accession>
<keyword id="KW-1003">Cell membrane</keyword>
<keyword id="KW-0472">Membrane</keyword>
<keyword id="KW-0812">Transmembrane</keyword>
<keyword id="KW-1133">Transmembrane helix</keyword>
<gene>
    <name type="ordered locus">lin2327</name>
</gene>
<proteinExistence type="inferred from homology"/>
<organism>
    <name type="scientific">Listeria innocua serovar 6a (strain ATCC BAA-680 / CLIP 11262)</name>
    <dbReference type="NCBI Taxonomy" id="272626"/>
    <lineage>
        <taxon>Bacteria</taxon>
        <taxon>Bacillati</taxon>
        <taxon>Bacillota</taxon>
        <taxon>Bacilli</taxon>
        <taxon>Bacillales</taxon>
        <taxon>Listeriaceae</taxon>
        <taxon>Listeria</taxon>
    </lineage>
</organism>
<evidence type="ECO:0000250" key="1"/>
<evidence type="ECO:0000255" key="2"/>
<evidence type="ECO:0000305" key="3"/>
<feature type="chain" id="PRO_0000388295" description="UPF0754 membrane protein lin2327">
    <location>
        <begin position="1"/>
        <end position="377"/>
    </location>
</feature>
<feature type="transmembrane region" description="Helical" evidence="2">
    <location>
        <begin position="1"/>
        <end position="21"/>
    </location>
</feature>
<feature type="transmembrane region" description="Helical" evidence="2">
    <location>
        <begin position="357"/>
        <end position="377"/>
    </location>
</feature>
<name>Y2327_LISIN</name>
<comment type="subcellular location">
    <subcellularLocation>
        <location evidence="1">Cell membrane</location>
        <topology evidence="1">Multi-pass membrane protein</topology>
    </subcellularLocation>
</comment>
<comment type="similarity">
    <text evidence="3">Belongs to the UPF0754 family.</text>
</comment>
<reference key="1">
    <citation type="journal article" date="2001" name="Science">
        <title>Comparative genomics of Listeria species.</title>
        <authorList>
            <person name="Glaser P."/>
            <person name="Frangeul L."/>
            <person name="Buchrieser C."/>
            <person name="Rusniok C."/>
            <person name="Amend A."/>
            <person name="Baquero F."/>
            <person name="Berche P."/>
            <person name="Bloecker H."/>
            <person name="Brandt P."/>
            <person name="Chakraborty T."/>
            <person name="Charbit A."/>
            <person name="Chetouani F."/>
            <person name="Couve E."/>
            <person name="de Daruvar A."/>
            <person name="Dehoux P."/>
            <person name="Domann E."/>
            <person name="Dominguez-Bernal G."/>
            <person name="Duchaud E."/>
            <person name="Durant L."/>
            <person name="Dussurget O."/>
            <person name="Entian K.-D."/>
            <person name="Fsihi H."/>
            <person name="Garcia-del Portillo F."/>
            <person name="Garrido P."/>
            <person name="Gautier L."/>
            <person name="Goebel W."/>
            <person name="Gomez-Lopez N."/>
            <person name="Hain T."/>
            <person name="Hauf J."/>
            <person name="Jackson D."/>
            <person name="Jones L.-M."/>
            <person name="Kaerst U."/>
            <person name="Kreft J."/>
            <person name="Kuhn M."/>
            <person name="Kunst F."/>
            <person name="Kurapkat G."/>
            <person name="Madueno E."/>
            <person name="Maitournam A."/>
            <person name="Mata Vicente J."/>
            <person name="Ng E."/>
            <person name="Nedjari H."/>
            <person name="Nordsiek G."/>
            <person name="Novella S."/>
            <person name="de Pablos B."/>
            <person name="Perez-Diaz J.-C."/>
            <person name="Purcell R."/>
            <person name="Remmel B."/>
            <person name="Rose M."/>
            <person name="Schlueter T."/>
            <person name="Simoes N."/>
            <person name="Tierrez A."/>
            <person name="Vazquez-Boland J.-A."/>
            <person name="Voss H."/>
            <person name="Wehland J."/>
            <person name="Cossart P."/>
        </authorList>
    </citation>
    <scope>NUCLEOTIDE SEQUENCE [LARGE SCALE GENOMIC DNA]</scope>
    <source>
        <strain>ATCC BAA-680 / CLIP 11262</strain>
    </source>
</reference>